<gene>
    <name type="primary">cpeA</name>
    <name type="synonym">rpeA</name>
</gene>
<comment type="function">
    <text>Light-harvesting photosynthetic tetrapyrrole chromophore-protein from the phycobiliprotein complex.</text>
</comment>
<comment type="subunit">
    <text evidence="1">Heterododecamer of 6 alpha and 6 beta chains. The basic functional unit of phycobiliproteins is a ring-shaped hexamer formed from two back-to-back trimers contacting via the alpha chain subunits. The trimers are composed of alpha/beta subunit heterodimers arranged around a three-fold axis of symmetry. The phycoerythrins also contain a gamma subunit which is located in the center of the hexamer.</text>
</comment>
<comment type="subcellular location">
    <subcellularLocation>
        <location>Plastid</location>
        <location>Chloroplast thylakoid membrane</location>
        <topology>Peripheral membrane protein</topology>
        <orientation>Stromal side</orientation>
    </subcellularLocation>
    <text>Forms the periphery of the phycobilisome rod.</text>
</comment>
<comment type="PTM">
    <text>Contains two covalently linked phycoerythrobilin chromophores.</text>
</comment>
<comment type="miscellaneous">
    <text>The light-harvesting antenna system in red algae and cyanobacteria is formed of phycobilisomes. These are composed of the phycobiliproteins phycoerythrin (CPE), phycocyanin (CPC) and allophycocyanin (APC). Cyanobacteria also contain phycoerythrocyanin (PCC). The phycobiliproteins all share the same subunit composition and organization with variations in the covalently bound open-chain tetrapyrrole chromophores. The phycobiliprotein complexes are arranged sequentially in antenna complexes linked by linker proteins with CPE at the periphery, CPC in the middle and APC at the core feeding to the photosynthetic reaction center.</text>
</comment>
<comment type="similarity">
    <text evidence="2">Belongs to the phycobiliprotein family.</text>
</comment>
<protein>
    <recommendedName>
        <fullName>R-phycoerythrin alpha chain</fullName>
    </recommendedName>
</protein>
<feature type="chain" id="PRO_0000199174" description="R-phycoerythrin alpha chain">
    <location>
        <begin position="1"/>
        <end position="164"/>
    </location>
</feature>
<feature type="binding site" evidence="1">
    <location>
        <position position="47"/>
    </location>
    <ligand>
        <name>(2R,3E)-phycoerythrobilin</name>
        <dbReference type="ChEBI" id="CHEBI:85276"/>
        <label>2</label>
    </ligand>
</feature>
<feature type="binding site" evidence="1">
    <location>
        <position position="81"/>
    </location>
    <ligand>
        <name>(2R,3E)-phycoerythrobilin</name>
        <dbReference type="ChEBI" id="CHEBI:85276"/>
        <label>1</label>
    </ligand>
</feature>
<feature type="binding site" description="covalent" evidence="1">
    <location>
        <position position="82"/>
    </location>
    <ligand>
        <name>(2R,3E)-phycoerythrobilin</name>
        <dbReference type="ChEBI" id="CHEBI:85276"/>
        <label>1</label>
    </ligand>
</feature>
<feature type="binding site" evidence="1">
    <location>
        <position position="84"/>
    </location>
    <ligand>
        <name>(2R,3E)-phycoerythrobilin</name>
        <dbReference type="ChEBI" id="CHEBI:85276"/>
        <label>1</label>
    </ligand>
</feature>
<feature type="binding site" evidence="1">
    <location>
        <position position="88"/>
    </location>
    <ligand>
        <name>(2R,3E)-phycoerythrobilin</name>
        <dbReference type="ChEBI" id="CHEBI:85276"/>
        <label>1</label>
    </ligand>
</feature>
<feature type="binding site" evidence="1">
    <location>
        <position position="137"/>
    </location>
    <ligand>
        <name>(2R,3E)-phycoerythrobilin</name>
        <dbReference type="ChEBI" id="CHEBI:85276"/>
        <label>2</label>
    </ligand>
</feature>
<feature type="binding site" description="covalent" evidence="1">
    <location>
        <position position="139"/>
    </location>
    <ligand>
        <name>(2R,3E)-phycoerythrobilin</name>
        <dbReference type="ChEBI" id="CHEBI:85276"/>
        <label>2</label>
    </ligand>
</feature>
<feature type="binding site" evidence="1">
    <location>
        <position position="142"/>
    </location>
    <ligand>
        <name>(2R,3E)-phycoerythrobilin</name>
        <dbReference type="ChEBI" id="CHEBI:85276"/>
        <label>2</label>
    </ligand>
</feature>
<feature type="helix" evidence="3">
    <location>
        <begin position="4"/>
        <end position="14"/>
    </location>
</feature>
<feature type="helix" evidence="3">
    <location>
        <begin position="21"/>
        <end position="62"/>
    </location>
</feature>
<feature type="helix" evidence="3">
    <location>
        <begin position="64"/>
        <end position="67"/>
    </location>
</feature>
<feature type="helix" evidence="3">
    <location>
        <begin position="76"/>
        <end position="99"/>
    </location>
</feature>
<feature type="helix" evidence="3">
    <location>
        <begin position="103"/>
        <end position="108"/>
    </location>
</feature>
<feature type="turn" evidence="3">
    <location>
        <begin position="109"/>
        <end position="112"/>
    </location>
</feature>
<feature type="helix" evidence="3">
    <location>
        <begin position="113"/>
        <end position="119"/>
    </location>
</feature>
<feature type="helix" evidence="3">
    <location>
        <begin position="124"/>
        <end position="137"/>
    </location>
</feature>
<feature type="turn" evidence="3">
    <location>
        <begin position="140"/>
        <end position="143"/>
    </location>
</feature>
<feature type="helix" evidence="3">
    <location>
        <begin position="146"/>
        <end position="161"/>
    </location>
</feature>
<organism>
    <name type="scientific">Griffithsia monilis</name>
    <name type="common">Red alga</name>
    <dbReference type="NCBI Taxonomy" id="42003"/>
    <lineage>
        <taxon>Eukaryota</taxon>
        <taxon>Rhodophyta</taxon>
        <taxon>Florideophyceae</taxon>
        <taxon>Rhodymeniophycidae</taxon>
        <taxon>Ceramiales</taxon>
        <taxon>Ceramiaceae</taxon>
        <taxon>Griffithsia</taxon>
    </lineage>
</organism>
<proteinExistence type="evidence at protein level"/>
<name>PHEA_GRIMO</name>
<geneLocation type="chloroplast"/>
<accession>O36005</accession>
<evidence type="ECO:0000269" key="1">
    <source>
    </source>
</evidence>
<evidence type="ECO:0000305" key="2"/>
<evidence type="ECO:0007829" key="3">
    <source>
        <dbReference type="PDB" id="1B8D"/>
    </source>
</evidence>
<keyword id="KW-0002">3D-structure</keyword>
<keyword id="KW-0042">Antenna complex</keyword>
<keyword id="KW-0089">Bile pigment</keyword>
<keyword id="KW-0150">Chloroplast</keyword>
<keyword id="KW-0157">Chromophore</keyword>
<keyword id="KW-0249">Electron transport</keyword>
<keyword id="KW-0472">Membrane</keyword>
<keyword id="KW-0602">Photosynthesis</keyword>
<keyword id="KW-0605">Phycobilisome</keyword>
<keyword id="KW-0934">Plastid</keyword>
<keyword id="KW-0793">Thylakoid</keyword>
<keyword id="KW-0813">Transport</keyword>
<sequence length="164" mass="17669">MKSVITTTISAADAAGRFPSSSDLESIQGNIQRAAARLEAAQKLSGNHEAVVKEAGDACFAKYSYLKNAGEAGDSPEKINKCYRDIDHYMRLINYSLVVGGTGPVDEWGIAGSREVYRALNLPGSAYIAAFTFTRDRLCVPRDMSSQAGVEFTSALDYVINSLC</sequence>
<reference key="1">
    <citation type="journal article" date="1999" name="J. Struct. Biol.">
        <title>Crystal structure of a phycourobilin-containing phycoerythrin at 1.90-A resolution.</title>
        <authorList>
            <person name="Ritter S."/>
            <person name="Hiller R.G."/>
            <person name="Wrench P.M."/>
            <person name="Welte W."/>
            <person name="Diederichs K."/>
        </authorList>
    </citation>
    <scope>NUCLEOTIDE SEQUENCE [GENOMIC DNA]</scope>
    <scope>X-RAY CRYSTALLOGRAPHY (1.9 ANGSTROMS) IN COMPLEX WITH PHYCOERYTHROBILIN AND CPEB</scope>
    <scope>CHROMOPHORE BINDING AT ASN-47; LYS-81; CYS-82; ARG-84; HIS-88; ARG-137; CYS-139 AND ARG-142</scope>
    <scope>SUBUNIT</scope>
</reference>
<dbReference type="EMBL" id="Z98528">
    <property type="protein sequence ID" value="CAB11029.1"/>
    <property type="molecule type" value="Genomic_DNA"/>
</dbReference>
<dbReference type="PDB" id="1B8D">
    <property type="method" value="X-ray"/>
    <property type="resolution" value="1.90 A"/>
    <property type="chains" value="A/K=1-164"/>
</dbReference>
<dbReference type="PDBsum" id="1B8D"/>
<dbReference type="SMR" id="O36005"/>
<dbReference type="EvolutionaryTrace" id="O36005"/>
<dbReference type="GO" id="GO:0009535">
    <property type="term" value="C:chloroplast thylakoid membrane"/>
    <property type="evidence" value="ECO:0007669"/>
    <property type="project" value="UniProtKB-SubCell"/>
</dbReference>
<dbReference type="GO" id="GO:0030089">
    <property type="term" value="C:phycobilisome"/>
    <property type="evidence" value="ECO:0007669"/>
    <property type="project" value="UniProtKB-KW"/>
</dbReference>
<dbReference type="GO" id="GO:0015979">
    <property type="term" value="P:photosynthesis"/>
    <property type="evidence" value="ECO:0007669"/>
    <property type="project" value="UniProtKB-KW"/>
</dbReference>
<dbReference type="CDD" id="cd14769">
    <property type="entry name" value="PE_alpha"/>
    <property type="match status" value="1"/>
</dbReference>
<dbReference type="Gene3D" id="1.10.490.20">
    <property type="entry name" value="Phycocyanins"/>
    <property type="match status" value="1"/>
</dbReference>
<dbReference type="InterPro" id="IPR009050">
    <property type="entry name" value="Globin-like_sf"/>
</dbReference>
<dbReference type="InterPro" id="IPR012128">
    <property type="entry name" value="Phycobilisome_asu/bsu"/>
</dbReference>
<dbReference type="InterPro" id="IPR038719">
    <property type="entry name" value="Phycobilisome_asu/bsu_sf"/>
</dbReference>
<dbReference type="PANTHER" id="PTHR34011:SF4">
    <property type="entry name" value="C-PHYCOCYANIN ALPHA SUBUNIT"/>
    <property type="match status" value="1"/>
</dbReference>
<dbReference type="PANTHER" id="PTHR34011">
    <property type="entry name" value="PHYCOBILISOME 32.1 KDA LINKER POLYPEPTIDE, PHYCOCYANIN-ASSOCIATED, ROD 2-RELATED"/>
    <property type="match status" value="1"/>
</dbReference>
<dbReference type="Pfam" id="PF00502">
    <property type="entry name" value="Phycobilisome"/>
    <property type="match status" value="1"/>
</dbReference>
<dbReference type="PIRSF" id="PIRSF000081">
    <property type="entry name" value="Phycocyanin"/>
    <property type="match status" value="1"/>
</dbReference>
<dbReference type="SUPFAM" id="SSF46458">
    <property type="entry name" value="Globin-like"/>
    <property type="match status" value="1"/>
</dbReference>